<keyword id="KW-0145">Chemotaxis</keyword>
<keyword id="KW-0378">Hydrolase</keyword>
<keyword id="KW-1185">Reference proteome</keyword>
<evidence type="ECO:0000255" key="1">
    <source>
        <dbReference type="HAMAP-Rule" id="MF_01440"/>
    </source>
</evidence>
<comment type="function">
    <text evidence="1">Probably deamidates glutamine residues to glutamate on methyl-accepting chemotaxis receptors (MCPs), playing an important role in chemotaxis.</text>
</comment>
<comment type="catalytic activity">
    <reaction evidence="1">
        <text>L-glutaminyl-[protein] + H2O = L-glutamyl-[protein] + NH4(+)</text>
        <dbReference type="Rhea" id="RHEA:16441"/>
        <dbReference type="Rhea" id="RHEA-COMP:10207"/>
        <dbReference type="Rhea" id="RHEA-COMP:10208"/>
        <dbReference type="ChEBI" id="CHEBI:15377"/>
        <dbReference type="ChEBI" id="CHEBI:28938"/>
        <dbReference type="ChEBI" id="CHEBI:29973"/>
        <dbReference type="ChEBI" id="CHEBI:30011"/>
        <dbReference type="EC" id="3.5.1.44"/>
    </reaction>
</comment>
<comment type="similarity">
    <text evidence="1">Belongs to the CheD family.</text>
</comment>
<feature type="chain" id="PRO_0000251098" description="Probable chemoreceptor glutamine deamidase CheD">
    <location>
        <begin position="1"/>
        <end position="161"/>
    </location>
</feature>
<protein>
    <recommendedName>
        <fullName evidence="1">Probable chemoreceptor glutamine deamidase CheD</fullName>
        <ecNumber evidence="1">3.5.1.44</ecNumber>
    </recommendedName>
</protein>
<reference key="1">
    <citation type="journal article" date="2005" name="Genome Res.">
        <title>Complete genome sequence of the hyperthermophilic archaeon Thermococcus kodakaraensis KOD1 and comparison with Pyrococcus genomes.</title>
        <authorList>
            <person name="Fukui T."/>
            <person name="Atomi H."/>
            <person name="Kanai T."/>
            <person name="Matsumi R."/>
            <person name="Fujiwara S."/>
            <person name="Imanaka T."/>
        </authorList>
    </citation>
    <scope>NUCLEOTIDE SEQUENCE [LARGE SCALE GENOMIC DNA]</scope>
    <source>
        <strain>ATCC BAA-918 / JCM 12380 / KOD1</strain>
    </source>
</reference>
<organism>
    <name type="scientific">Thermococcus kodakarensis (strain ATCC BAA-918 / JCM 12380 / KOD1)</name>
    <name type="common">Pyrococcus kodakaraensis (strain KOD1)</name>
    <dbReference type="NCBI Taxonomy" id="69014"/>
    <lineage>
        <taxon>Archaea</taxon>
        <taxon>Methanobacteriati</taxon>
        <taxon>Methanobacteriota</taxon>
        <taxon>Thermococci</taxon>
        <taxon>Thermococcales</taxon>
        <taxon>Thermococcaceae</taxon>
        <taxon>Thermococcus</taxon>
    </lineage>
</organism>
<dbReference type="EC" id="3.5.1.44" evidence="1"/>
<dbReference type="EMBL" id="AP006878">
    <property type="protein sequence ID" value="BAD84828.1"/>
    <property type="molecule type" value="Genomic_DNA"/>
</dbReference>
<dbReference type="RefSeq" id="WP_011249590.1">
    <property type="nucleotide sequence ID" value="NC_006624.1"/>
</dbReference>
<dbReference type="SMR" id="Q5JF89"/>
<dbReference type="STRING" id="69014.TK0639"/>
<dbReference type="EnsemblBacteria" id="BAD84828">
    <property type="protein sequence ID" value="BAD84828"/>
    <property type="gene ID" value="TK0639"/>
</dbReference>
<dbReference type="GeneID" id="3234092"/>
<dbReference type="KEGG" id="tko:TK0639"/>
<dbReference type="PATRIC" id="fig|69014.16.peg.620"/>
<dbReference type="eggNOG" id="arCOG02380">
    <property type="taxonomic scope" value="Archaea"/>
</dbReference>
<dbReference type="HOGENOM" id="CLU_087854_2_0_2"/>
<dbReference type="InParanoid" id="Q5JF89"/>
<dbReference type="OrthoDB" id="10499at2157"/>
<dbReference type="PhylomeDB" id="Q5JF89"/>
<dbReference type="Proteomes" id="UP000000536">
    <property type="component" value="Chromosome"/>
</dbReference>
<dbReference type="GO" id="GO:0050568">
    <property type="term" value="F:protein-glutamine glutaminase activity"/>
    <property type="evidence" value="ECO:0007669"/>
    <property type="project" value="UniProtKB-UniRule"/>
</dbReference>
<dbReference type="GO" id="GO:0006935">
    <property type="term" value="P:chemotaxis"/>
    <property type="evidence" value="ECO:0007669"/>
    <property type="project" value="UniProtKB-UniRule"/>
</dbReference>
<dbReference type="CDD" id="cd16352">
    <property type="entry name" value="CheD"/>
    <property type="match status" value="1"/>
</dbReference>
<dbReference type="Gene3D" id="3.30.1330.200">
    <property type="match status" value="1"/>
</dbReference>
<dbReference type="HAMAP" id="MF_01440">
    <property type="entry name" value="CheD"/>
    <property type="match status" value="1"/>
</dbReference>
<dbReference type="InterPro" id="IPR038592">
    <property type="entry name" value="CheD-like_sf"/>
</dbReference>
<dbReference type="InterPro" id="IPR005659">
    <property type="entry name" value="Chemorcpt_Glu_NH3ase_CheD"/>
</dbReference>
<dbReference type="InterPro" id="IPR011324">
    <property type="entry name" value="Cytotoxic_necrot_fac-like_cat"/>
</dbReference>
<dbReference type="PANTHER" id="PTHR35147">
    <property type="entry name" value="CHEMORECEPTOR GLUTAMINE DEAMIDASE CHED-RELATED"/>
    <property type="match status" value="1"/>
</dbReference>
<dbReference type="PANTHER" id="PTHR35147:SF1">
    <property type="entry name" value="CHEMORECEPTOR GLUTAMINE DEAMIDASE CHED-RELATED"/>
    <property type="match status" value="1"/>
</dbReference>
<dbReference type="Pfam" id="PF03975">
    <property type="entry name" value="CheD"/>
    <property type="match status" value="1"/>
</dbReference>
<dbReference type="SUPFAM" id="SSF64438">
    <property type="entry name" value="CNF1/YfiH-like putative cysteine hydrolases"/>
    <property type="match status" value="1"/>
</dbReference>
<gene>
    <name evidence="1" type="primary">cheD</name>
    <name type="ordered locus">TK0639</name>
</gene>
<accession>Q5JF89</accession>
<name>CHED_THEKO</name>
<sequence length="161" mass="17398">MEVKVGIGDYAVAKKTGIISTYGLGSCVGITLYDRLNRVGGLLHALLPESARYGGRGNPAKYVDTGLELLIKDMMKLGASPRRLEAKLFGGAHMFTNVSNENLMVGKKNVEVAKRELKKRGIRLVAEDTGGKGGRTIYLDVSTGKVRMRKVSNGKVIEAVF</sequence>
<proteinExistence type="inferred from homology"/>